<evidence type="ECO:0000250" key="1"/>
<evidence type="ECO:0000250" key="2">
    <source>
        <dbReference type="UniProtKB" id="P64467"/>
    </source>
</evidence>
<evidence type="ECO:0000305" key="3"/>
<organism>
    <name type="scientific">Shigella sonnei (strain Ss046)</name>
    <dbReference type="NCBI Taxonomy" id="300269"/>
    <lineage>
        <taxon>Bacteria</taxon>
        <taxon>Pseudomonadati</taxon>
        <taxon>Pseudomonadota</taxon>
        <taxon>Gammaproteobacteria</taxon>
        <taxon>Enterobacterales</taxon>
        <taxon>Enterobacteriaceae</taxon>
        <taxon>Shigella</taxon>
    </lineage>
</organism>
<sequence length="71" mass="8417">MTVQDYLLKFRKISSLESLEKLYDHLNYTLTDDQELINMYRAADHRRAELVSGGRLFDLGQVPKSVWHYVQ</sequence>
<reference key="1">
    <citation type="journal article" date="2005" name="Nucleic Acids Res.">
        <title>Genome dynamics and diversity of Shigella species, the etiologic agents of bacillary dysentery.</title>
        <authorList>
            <person name="Yang F."/>
            <person name="Yang J."/>
            <person name="Zhang X."/>
            <person name="Chen L."/>
            <person name="Jiang Y."/>
            <person name="Yan Y."/>
            <person name="Tang X."/>
            <person name="Wang J."/>
            <person name="Xiong Z."/>
            <person name="Dong J."/>
            <person name="Xue Y."/>
            <person name="Zhu Y."/>
            <person name="Xu X."/>
            <person name="Sun L."/>
            <person name="Chen S."/>
            <person name="Nie H."/>
            <person name="Peng J."/>
            <person name="Xu J."/>
            <person name="Wang Y."/>
            <person name="Yuan Z."/>
            <person name="Wen Y."/>
            <person name="Yao Z."/>
            <person name="Shen Y."/>
            <person name="Qiang B."/>
            <person name="Hou Y."/>
            <person name="Yu J."/>
            <person name="Jin Q."/>
        </authorList>
    </citation>
    <scope>NUCLEOTIDE SEQUENCE [LARGE SCALE GENOMIC DNA]</scope>
    <source>
        <strain>Ss046</strain>
    </source>
</reference>
<keyword id="KW-0238">DNA-binding</keyword>
<keyword id="KW-1185">Reference proteome</keyword>
<keyword id="KW-0804">Transcription</keyword>
<keyword id="KW-0805">Transcription regulation</keyword>
<accession>Q3Z1Y0</accession>
<dbReference type="EMBL" id="CP000038">
    <property type="protein sequence ID" value="AAZ88232.1"/>
    <property type="molecule type" value="Genomic_DNA"/>
</dbReference>
<dbReference type="RefSeq" id="WP_000217950.1">
    <property type="nucleotide sequence ID" value="NC_007384.1"/>
</dbReference>
<dbReference type="SMR" id="Q3Z1Y0"/>
<dbReference type="GeneID" id="93775777"/>
<dbReference type="KEGG" id="ssn:SSON_1533"/>
<dbReference type="HOGENOM" id="CLU_190629_0_0_6"/>
<dbReference type="Proteomes" id="UP000002529">
    <property type="component" value="Chromosome"/>
</dbReference>
<dbReference type="GO" id="GO:0003677">
    <property type="term" value="F:DNA binding"/>
    <property type="evidence" value="ECO:0007669"/>
    <property type="project" value="UniProtKB-KW"/>
</dbReference>
<dbReference type="FunFam" id="1.20.1280.40:FF:000002">
    <property type="entry name" value="OriC-binding nucleoid-associated protein"/>
    <property type="match status" value="1"/>
</dbReference>
<dbReference type="Gene3D" id="1.20.1280.40">
    <property type="entry name" value="HHA"/>
    <property type="match status" value="1"/>
</dbReference>
<dbReference type="InterPro" id="IPR007985">
    <property type="entry name" value="Hemolysn_expr_modulating_HHA"/>
</dbReference>
<dbReference type="InterPro" id="IPR036666">
    <property type="entry name" value="HHA_sf"/>
</dbReference>
<dbReference type="NCBIfam" id="NF007703">
    <property type="entry name" value="PRK10391.1"/>
    <property type="match status" value="1"/>
</dbReference>
<dbReference type="Pfam" id="PF05321">
    <property type="entry name" value="HHA"/>
    <property type="match status" value="1"/>
</dbReference>
<dbReference type="SUPFAM" id="SSF68989">
    <property type="entry name" value="Hemolysin expression modulating protein HHA"/>
    <property type="match status" value="1"/>
</dbReference>
<name>CNU_SHISS</name>
<proteinExistence type="inferred from homology"/>
<gene>
    <name type="primary">cnu</name>
    <name type="synonym">ydgT</name>
    <name type="ordered locus">SSON_1533</name>
</gene>
<feature type="chain" id="PRO_0000305055" description="OriC-binding nucleoid-associated protein">
    <location>
        <begin position="1"/>
        <end position="71"/>
    </location>
</feature>
<feature type="site" description="Interacts with H-NS" evidence="1">
    <location>
        <position position="44"/>
    </location>
</feature>
<protein>
    <recommendedName>
        <fullName>OriC-binding nucleoid-associated protein</fullName>
    </recommendedName>
    <alternativeName>
        <fullName>H-NS/StpA-binding protein 2</fullName>
    </alternativeName>
    <alternativeName>
        <fullName>Transcription modulator YdgT</fullName>
    </alternativeName>
</protein>
<comment type="function">
    <text evidence="2">Modifies the set of genes regulated by H-NS; Hha and cnu (YdgT) increase the number of genes bound by H-NS/StpA and may also modulate the oligomerization of the H-NS/StpA-complex on DNA. The complex formed with H-NS binds to the specific 26-bp cnb site in the origin of replication oriC.</text>
</comment>
<comment type="subunit">
    <text evidence="2">Forms complexes with both H-NS and StpA.</text>
</comment>
<comment type="similarity">
    <text evidence="3">Belongs to the Hha/YmoA/Cnu family.</text>
</comment>